<accession>Q48R70</accession>
<dbReference type="EC" id="2.1.1.-" evidence="1"/>
<dbReference type="EMBL" id="CP000056">
    <property type="protein sequence ID" value="AAX72790.1"/>
    <property type="molecule type" value="Genomic_DNA"/>
</dbReference>
<dbReference type="RefSeq" id="WP_011285204.1">
    <property type="nucleotide sequence ID" value="NC_007296.2"/>
</dbReference>
<dbReference type="SMR" id="Q48R70"/>
<dbReference type="KEGG" id="spb:M28_Spy1680"/>
<dbReference type="HOGENOM" id="CLU_049382_0_1_9"/>
<dbReference type="GO" id="GO:0005737">
    <property type="term" value="C:cytoplasm"/>
    <property type="evidence" value="ECO:0007669"/>
    <property type="project" value="UniProtKB-SubCell"/>
</dbReference>
<dbReference type="GO" id="GO:0016279">
    <property type="term" value="F:protein-lysine N-methyltransferase activity"/>
    <property type="evidence" value="ECO:0007669"/>
    <property type="project" value="RHEA"/>
</dbReference>
<dbReference type="GO" id="GO:0032259">
    <property type="term" value="P:methylation"/>
    <property type="evidence" value="ECO:0007669"/>
    <property type="project" value="UniProtKB-KW"/>
</dbReference>
<dbReference type="CDD" id="cd02440">
    <property type="entry name" value="AdoMet_MTases"/>
    <property type="match status" value="1"/>
</dbReference>
<dbReference type="Gene3D" id="3.40.50.150">
    <property type="entry name" value="Vaccinia Virus protein VP39"/>
    <property type="match status" value="1"/>
</dbReference>
<dbReference type="HAMAP" id="MF_00735">
    <property type="entry name" value="Methyltr_PrmA"/>
    <property type="match status" value="1"/>
</dbReference>
<dbReference type="InterPro" id="IPR050078">
    <property type="entry name" value="Ribosomal_L11_MeTrfase_PrmA"/>
</dbReference>
<dbReference type="InterPro" id="IPR004498">
    <property type="entry name" value="Ribosomal_PrmA_MeTrfase"/>
</dbReference>
<dbReference type="InterPro" id="IPR029063">
    <property type="entry name" value="SAM-dependent_MTases_sf"/>
</dbReference>
<dbReference type="NCBIfam" id="TIGR00406">
    <property type="entry name" value="prmA"/>
    <property type="match status" value="1"/>
</dbReference>
<dbReference type="PANTHER" id="PTHR43648">
    <property type="entry name" value="ELECTRON TRANSFER FLAVOPROTEIN BETA SUBUNIT LYSINE METHYLTRANSFERASE"/>
    <property type="match status" value="1"/>
</dbReference>
<dbReference type="PANTHER" id="PTHR43648:SF1">
    <property type="entry name" value="ELECTRON TRANSFER FLAVOPROTEIN BETA SUBUNIT LYSINE METHYLTRANSFERASE"/>
    <property type="match status" value="1"/>
</dbReference>
<dbReference type="Pfam" id="PF06325">
    <property type="entry name" value="PrmA"/>
    <property type="match status" value="1"/>
</dbReference>
<dbReference type="PIRSF" id="PIRSF000401">
    <property type="entry name" value="RPL11_MTase"/>
    <property type="match status" value="1"/>
</dbReference>
<dbReference type="SUPFAM" id="SSF53335">
    <property type="entry name" value="S-adenosyl-L-methionine-dependent methyltransferases"/>
    <property type="match status" value="1"/>
</dbReference>
<proteinExistence type="inferred from homology"/>
<keyword id="KW-0963">Cytoplasm</keyword>
<keyword id="KW-0489">Methyltransferase</keyword>
<keyword id="KW-0949">S-adenosyl-L-methionine</keyword>
<keyword id="KW-0808">Transferase</keyword>
<comment type="function">
    <text evidence="1">Methylates ribosomal protein L11.</text>
</comment>
<comment type="catalytic activity">
    <reaction evidence="1">
        <text>L-lysyl-[protein] + 3 S-adenosyl-L-methionine = N(6),N(6),N(6)-trimethyl-L-lysyl-[protein] + 3 S-adenosyl-L-homocysteine + 3 H(+)</text>
        <dbReference type="Rhea" id="RHEA:54192"/>
        <dbReference type="Rhea" id="RHEA-COMP:9752"/>
        <dbReference type="Rhea" id="RHEA-COMP:13826"/>
        <dbReference type="ChEBI" id="CHEBI:15378"/>
        <dbReference type="ChEBI" id="CHEBI:29969"/>
        <dbReference type="ChEBI" id="CHEBI:57856"/>
        <dbReference type="ChEBI" id="CHEBI:59789"/>
        <dbReference type="ChEBI" id="CHEBI:61961"/>
    </reaction>
</comment>
<comment type="subcellular location">
    <subcellularLocation>
        <location evidence="1">Cytoplasm</location>
    </subcellularLocation>
</comment>
<comment type="similarity">
    <text evidence="1">Belongs to the methyltransferase superfamily. PrmA family.</text>
</comment>
<feature type="chain" id="PRO_1000046110" description="Ribosomal protein L11 methyltransferase">
    <location>
        <begin position="1"/>
        <end position="317"/>
    </location>
</feature>
<feature type="binding site" evidence="1">
    <location>
        <position position="158"/>
    </location>
    <ligand>
        <name>S-adenosyl-L-methionine</name>
        <dbReference type="ChEBI" id="CHEBI:59789"/>
    </ligand>
</feature>
<feature type="binding site" evidence="1">
    <location>
        <position position="179"/>
    </location>
    <ligand>
        <name>S-adenosyl-L-methionine</name>
        <dbReference type="ChEBI" id="CHEBI:59789"/>
    </ligand>
</feature>
<feature type="binding site" evidence="1">
    <location>
        <position position="201"/>
    </location>
    <ligand>
        <name>S-adenosyl-L-methionine</name>
        <dbReference type="ChEBI" id="CHEBI:59789"/>
    </ligand>
</feature>
<feature type="binding site" evidence="1">
    <location>
        <position position="244"/>
    </location>
    <ligand>
        <name>S-adenosyl-L-methionine</name>
        <dbReference type="ChEBI" id="CHEBI:59789"/>
    </ligand>
</feature>
<gene>
    <name evidence="1" type="primary">prmA</name>
    <name type="ordered locus">M28_Spy1680</name>
</gene>
<organism>
    <name type="scientific">Streptococcus pyogenes serotype M28 (strain MGAS6180)</name>
    <dbReference type="NCBI Taxonomy" id="319701"/>
    <lineage>
        <taxon>Bacteria</taxon>
        <taxon>Bacillati</taxon>
        <taxon>Bacillota</taxon>
        <taxon>Bacilli</taxon>
        <taxon>Lactobacillales</taxon>
        <taxon>Streptococcaceae</taxon>
        <taxon>Streptococcus</taxon>
    </lineage>
</organism>
<sequence length="317" mass="34330">METWQEVTVHVHRDAQEAVSHVLIETGSQGVAIADSADYIGQKDRFGELYPDVEQSDMIAIIAYYPSSTNLADVIATINEQLAELASFGLQVGQVTVDSQELAEEDWADNWKKYYEPARITHDLTIVPSWTDYDASAGEKVIKLDPGMAFGTGTHPTTKMSLFALEQILRGGETVIDVGTGSGVLSIASSLLGAKTIYAYDLDDVAVRVAQENIDLNQGTDNIHVAAGDLLKGVSQEADVIVANILADILVLLTDDAYRLIKKEGYLILSGIISEKLDMVLEAAFSAGFFLETHMVQGEWNALVFKKTDDISGVIGG</sequence>
<protein>
    <recommendedName>
        <fullName evidence="1">Ribosomal protein L11 methyltransferase</fullName>
        <shortName evidence="1">L11 Mtase</shortName>
        <ecNumber evidence="1">2.1.1.-</ecNumber>
    </recommendedName>
</protein>
<name>PRMA_STRPM</name>
<evidence type="ECO:0000255" key="1">
    <source>
        <dbReference type="HAMAP-Rule" id="MF_00735"/>
    </source>
</evidence>
<reference key="1">
    <citation type="journal article" date="2005" name="J. Infect. Dis.">
        <title>Genome sequence of a serotype M28 strain of group A Streptococcus: potential new insights into puerperal sepsis and bacterial disease specificity.</title>
        <authorList>
            <person name="Green N.M."/>
            <person name="Zhang S."/>
            <person name="Porcella S.F."/>
            <person name="Nagiec M.J."/>
            <person name="Barbian K.D."/>
            <person name="Beres S.B."/>
            <person name="Lefebvre R.B."/>
            <person name="Musser J.M."/>
        </authorList>
    </citation>
    <scope>NUCLEOTIDE SEQUENCE [LARGE SCALE GENOMIC DNA]</scope>
    <source>
        <strain>MGAS6180</strain>
    </source>
</reference>